<comment type="subunit">
    <text>Part of the 30S ribosomal subunit.</text>
</comment>
<comment type="subcellular location">
    <subcellularLocation>
        <location>Plastid</location>
    </subcellularLocation>
</comment>
<comment type="similarity">
    <text evidence="1">Belongs to the bacterial ribosomal protein bS18 family.</text>
</comment>
<feature type="chain" id="PRO_0000111283" description="Small ribosomal subunit protein bS18c">
    <location>
        <begin position="1"/>
        <end position="92"/>
    </location>
</feature>
<organism>
    <name type="scientific">Epifagus virginiana</name>
    <name type="common">Beechdrops</name>
    <name type="synonym">Orobanche virginiana</name>
    <dbReference type="NCBI Taxonomy" id="4177"/>
    <lineage>
        <taxon>Eukaryota</taxon>
        <taxon>Viridiplantae</taxon>
        <taxon>Streptophyta</taxon>
        <taxon>Embryophyta</taxon>
        <taxon>Tracheophyta</taxon>
        <taxon>Spermatophyta</taxon>
        <taxon>Magnoliopsida</taxon>
        <taxon>eudicotyledons</taxon>
        <taxon>Gunneridae</taxon>
        <taxon>Pentapetalae</taxon>
        <taxon>asterids</taxon>
        <taxon>lamiids</taxon>
        <taxon>Lamiales</taxon>
        <taxon>Orobanchaceae</taxon>
        <taxon>Orobancheae</taxon>
        <taxon>Epifagus</taxon>
    </lineage>
</organism>
<sequence length="92" mass="11017">MYKFKRSFRRRLSPIGSGNLIYYRNMSLISRFISEQGKILSRRVNRLTLKQQRLITIAIKQARILSLLPFINNEKQFERIESITRVKGFIKK</sequence>
<gene>
    <name type="primary">rps18</name>
</gene>
<dbReference type="EMBL" id="M81884">
    <property type="protein sequence ID" value="AAA65856.1"/>
    <property type="molecule type" value="Genomic_DNA"/>
</dbReference>
<dbReference type="PIR" id="S78386">
    <property type="entry name" value="S78386"/>
</dbReference>
<dbReference type="RefSeq" id="NP_054382.1">
    <property type="nucleotide sequence ID" value="NC_001568.1"/>
</dbReference>
<dbReference type="SMR" id="P30061"/>
<dbReference type="GeneID" id="801399"/>
<dbReference type="GO" id="GO:0005763">
    <property type="term" value="C:mitochondrial small ribosomal subunit"/>
    <property type="evidence" value="ECO:0007669"/>
    <property type="project" value="TreeGrafter"/>
</dbReference>
<dbReference type="GO" id="GO:0009536">
    <property type="term" value="C:plastid"/>
    <property type="evidence" value="ECO:0007669"/>
    <property type="project" value="UniProtKB-SubCell"/>
</dbReference>
<dbReference type="GO" id="GO:0070181">
    <property type="term" value="F:small ribosomal subunit rRNA binding"/>
    <property type="evidence" value="ECO:0007669"/>
    <property type="project" value="TreeGrafter"/>
</dbReference>
<dbReference type="GO" id="GO:0003735">
    <property type="term" value="F:structural constituent of ribosome"/>
    <property type="evidence" value="ECO:0007669"/>
    <property type="project" value="InterPro"/>
</dbReference>
<dbReference type="GO" id="GO:0006412">
    <property type="term" value="P:translation"/>
    <property type="evidence" value="ECO:0007669"/>
    <property type="project" value="InterPro"/>
</dbReference>
<dbReference type="FunFam" id="4.10.640.10:FF:000002">
    <property type="entry name" value="30S ribosomal protein S18, chloroplastic"/>
    <property type="match status" value="1"/>
</dbReference>
<dbReference type="Gene3D" id="4.10.640.10">
    <property type="entry name" value="Ribosomal protein S18"/>
    <property type="match status" value="1"/>
</dbReference>
<dbReference type="HAMAP" id="MF_00270">
    <property type="entry name" value="Ribosomal_bS18"/>
    <property type="match status" value="1"/>
</dbReference>
<dbReference type="InterPro" id="IPR001648">
    <property type="entry name" value="Ribosomal_bS18"/>
</dbReference>
<dbReference type="InterPro" id="IPR018275">
    <property type="entry name" value="Ribosomal_bS18_CS"/>
</dbReference>
<dbReference type="InterPro" id="IPR036870">
    <property type="entry name" value="Ribosomal_bS18_sf"/>
</dbReference>
<dbReference type="NCBIfam" id="TIGR00165">
    <property type="entry name" value="S18"/>
    <property type="match status" value="1"/>
</dbReference>
<dbReference type="PANTHER" id="PTHR13479">
    <property type="entry name" value="30S RIBOSOMAL PROTEIN S18"/>
    <property type="match status" value="1"/>
</dbReference>
<dbReference type="PANTHER" id="PTHR13479:SF40">
    <property type="entry name" value="SMALL RIBOSOMAL SUBUNIT PROTEIN BS18M"/>
    <property type="match status" value="1"/>
</dbReference>
<dbReference type="Pfam" id="PF01084">
    <property type="entry name" value="Ribosomal_S18"/>
    <property type="match status" value="1"/>
</dbReference>
<dbReference type="PRINTS" id="PR00974">
    <property type="entry name" value="RIBOSOMALS18"/>
</dbReference>
<dbReference type="SUPFAM" id="SSF46911">
    <property type="entry name" value="Ribosomal protein S18"/>
    <property type="match status" value="1"/>
</dbReference>
<dbReference type="PROSITE" id="PS00057">
    <property type="entry name" value="RIBOSOMAL_S18"/>
    <property type="match status" value="1"/>
</dbReference>
<accession>P30061</accession>
<proteinExistence type="inferred from homology"/>
<protein>
    <recommendedName>
        <fullName evidence="1">Small ribosomal subunit protein bS18c</fullName>
    </recommendedName>
    <alternativeName>
        <fullName>Plastid 30S ribosomal protein S18</fullName>
    </alternativeName>
</protein>
<geneLocation type="non-photosynthetic plastid"/>
<keyword id="KW-0934">Plastid</keyword>
<keyword id="KW-0687">Ribonucleoprotein</keyword>
<keyword id="KW-0689">Ribosomal protein</keyword>
<keyword id="KW-0694">RNA-binding</keyword>
<keyword id="KW-0699">rRNA-binding</keyword>
<reference key="1">
    <citation type="journal article" date="1992" name="Proc. Natl. Acad. Sci. U.S.A.">
        <title>Function and evolution of a minimal plastid genome from a nonphotosynthetic parasitic plant.</title>
        <authorList>
            <person name="Wolfe K.H."/>
            <person name="Morden C.W."/>
            <person name="Palmer J.D."/>
        </authorList>
    </citation>
    <scope>NUCLEOTIDE SEQUENCE [LARGE SCALE GENOMIC DNA]</scope>
</reference>
<reference key="2">
    <citation type="journal article" date="1992" name="J. Mol. Evol.">
        <title>Rapid evolution of the plastid translational apparatus in a nonphotosynthetic plant: loss or accelerated sequence evolution of tRNA and ribosomal protein genes.</title>
        <authorList>
            <person name="Wolfe K.H."/>
            <person name="Morden C.W."/>
            <person name="Ems S.C."/>
            <person name="Palmer J.D."/>
        </authorList>
    </citation>
    <scope>NUCLEOTIDE SEQUENCE [GENOMIC DNA]</scope>
</reference>
<name>RR18_EPIVI</name>
<evidence type="ECO:0000305" key="1"/>